<reference key="1">
    <citation type="journal article" date="2004" name="Nucleic Acids Res.">
        <title>Thermoadaptation trait revealed by the genome sequence of thermophilic Geobacillus kaustophilus.</title>
        <authorList>
            <person name="Takami H."/>
            <person name="Takaki Y."/>
            <person name="Chee G.-J."/>
            <person name="Nishi S."/>
            <person name="Shimamura S."/>
            <person name="Suzuki H."/>
            <person name="Matsui S."/>
            <person name="Uchiyama I."/>
        </authorList>
    </citation>
    <scope>NUCLEOTIDE SEQUENCE [LARGE SCALE GENOMIC DNA]</scope>
    <source>
        <strain>HTA426</strain>
    </source>
</reference>
<gene>
    <name evidence="1" type="primary">prsA</name>
    <name type="ordered locus">GK0656</name>
</gene>
<feature type="signal peptide" evidence="1">
    <location>
        <begin position="1"/>
        <end position="18"/>
    </location>
</feature>
<feature type="chain" id="PRO_1000137383" description="Foldase protein PrsA">
    <location>
        <begin position="19"/>
        <end position="281"/>
    </location>
</feature>
<feature type="domain" description="PpiC" evidence="1">
    <location>
        <begin position="133"/>
        <end position="223"/>
    </location>
</feature>
<feature type="lipid moiety-binding region" description="N-palmitoyl cysteine" evidence="1">
    <location>
        <position position="19"/>
    </location>
</feature>
<feature type="lipid moiety-binding region" description="S-diacylglycerol cysteine" evidence="1">
    <location>
        <position position="19"/>
    </location>
</feature>
<comment type="function">
    <text evidence="1">Plays a major role in protein secretion by helping the post-translocational extracellular folding of several secreted proteins.</text>
</comment>
<comment type="catalytic activity">
    <reaction evidence="1">
        <text>[protein]-peptidylproline (omega=180) = [protein]-peptidylproline (omega=0)</text>
        <dbReference type="Rhea" id="RHEA:16237"/>
        <dbReference type="Rhea" id="RHEA-COMP:10747"/>
        <dbReference type="Rhea" id="RHEA-COMP:10748"/>
        <dbReference type="ChEBI" id="CHEBI:83833"/>
        <dbReference type="ChEBI" id="CHEBI:83834"/>
        <dbReference type="EC" id="5.2.1.8"/>
    </reaction>
</comment>
<comment type="subcellular location">
    <subcellularLocation>
        <location evidence="1">Cell membrane</location>
        <topology evidence="1">Lipid-anchor</topology>
    </subcellularLocation>
</comment>
<comment type="similarity">
    <text evidence="1">Belongs to the PrsA family.</text>
</comment>
<organism>
    <name type="scientific">Geobacillus kaustophilus (strain HTA426)</name>
    <dbReference type="NCBI Taxonomy" id="235909"/>
    <lineage>
        <taxon>Bacteria</taxon>
        <taxon>Bacillati</taxon>
        <taxon>Bacillota</taxon>
        <taxon>Bacilli</taxon>
        <taxon>Bacillales</taxon>
        <taxon>Anoxybacillaceae</taxon>
        <taxon>Geobacillus</taxon>
        <taxon>Geobacillus thermoleovorans group</taxon>
    </lineage>
</organism>
<name>PRSA_GEOKA</name>
<protein>
    <recommendedName>
        <fullName evidence="1">Foldase protein PrsA</fullName>
        <ecNumber evidence="1">5.2.1.8</ecNumber>
    </recommendedName>
</protein>
<dbReference type="EC" id="5.2.1.8" evidence="1"/>
<dbReference type="EMBL" id="BA000043">
    <property type="protein sequence ID" value="BAD74941.1"/>
    <property type="molecule type" value="Genomic_DNA"/>
</dbReference>
<dbReference type="RefSeq" id="WP_011230159.1">
    <property type="nucleotide sequence ID" value="NC_006510.1"/>
</dbReference>
<dbReference type="SMR" id="Q5L289"/>
<dbReference type="STRING" id="235909.GK0656"/>
<dbReference type="KEGG" id="gka:GK0656"/>
<dbReference type="eggNOG" id="COG0760">
    <property type="taxonomic scope" value="Bacteria"/>
</dbReference>
<dbReference type="HOGENOM" id="CLU_034646_6_1_9"/>
<dbReference type="Proteomes" id="UP000001172">
    <property type="component" value="Chromosome"/>
</dbReference>
<dbReference type="GO" id="GO:0005886">
    <property type="term" value="C:plasma membrane"/>
    <property type="evidence" value="ECO:0007669"/>
    <property type="project" value="UniProtKB-SubCell"/>
</dbReference>
<dbReference type="GO" id="GO:0003755">
    <property type="term" value="F:peptidyl-prolyl cis-trans isomerase activity"/>
    <property type="evidence" value="ECO:0007669"/>
    <property type="project" value="UniProtKB-UniRule"/>
</dbReference>
<dbReference type="GO" id="GO:0006457">
    <property type="term" value="P:protein folding"/>
    <property type="evidence" value="ECO:0007669"/>
    <property type="project" value="UniProtKB-UniRule"/>
</dbReference>
<dbReference type="GO" id="GO:0015031">
    <property type="term" value="P:protein transport"/>
    <property type="evidence" value="ECO:0007669"/>
    <property type="project" value="InterPro"/>
</dbReference>
<dbReference type="Gene3D" id="3.10.50.40">
    <property type="match status" value="1"/>
</dbReference>
<dbReference type="Gene3D" id="1.10.3120.10">
    <property type="entry name" value="Trigger factor, C-terminal domain"/>
    <property type="match status" value="1"/>
</dbReference>
<dbReference type="HAMAP" id="MF_01145">
    <property type="entry name" value="Foldase_PrsA"/>
    <property type="match status" value="1"/>
</dbReference>
<dbReference type="InterPro" id="IPR023059">
    <property type="entry name" value="Foldase_PrsA"/>
</dbReference>
<dbReference type="InterPro" id="IPR046357">
    <property type="entry name" value="PPIase_dom_sf"/>
</dbReference>
<dbReference type="InterPro" id="IPR000297">
    <property type="entry name" value="PPIase_PpiC"/>
</dbReference>
<dbReference type="InterPro" id="IPR023058">
    <property type="entry name" value="PPIase_PpiC_CS"/>
</dbReference>
<dbReference type="InterPro" id="IPR050245">
    <property type="entry name" value="PrsA_foldase"/>
</dbReference>
<dbReference type="InterPro" id="IPR008880">
    <property type="entry name" value="Trigger_fac_C"/>
</dbReference>
<dbReference type="InterPro" id="IPR037041">
    <property type="entry name" value="Trigger_fac_C_sf"/>
</dbReference>
<dbReference type="InterPro" id="IPR027304">
    <property type="entry name" value="Trigger_fact/SurA_dom_sf"/>
</dbReference>
<dbReference type="PANTHER" id="PTHR47245:SF1">
    <property type="entry name" value="FOLDASE PROTEIN PRSA"/>
    <property type="match status" value="1"/>
</dbReference>
<dbReference type="PANTHER" id="PTHR47245">
    <property type="entry name" value="PEPTIDYLPROLYL ISOMERASE"/>
    <property type="match status" value="1"/>
</dbReference>
<dbReference type="Pfam" id="PF13616">
    <property type="entry name" value="Rotamase_3"/>
    <property type="match status" value="1"/>
</dbReference>
<dbReference type="Pfam" id="PF05698">
    <property type="entry name" value="Trigger_C"/>
    <property type="match status" value="1"/>
</dbReference>
<dbReference type="SUPFAM" id="SSF54534">
    <property type="entry name" value="FKBP-like"/>
    <property type="match status" value="1"/>
</dbReference>
<dbReference type="SUPFAM" id="SSF109998">
    <property type="entry name" value="Triger factor/SurA peptide-binding domain-like"/>
    <property type="match status" value="1"/>
</dbReference>
<dbReference type="PROSITE" id="PS01096">
    <property type="entry name" value="PPIC_PPIASE_1"/>
    <property type="match status" value="1"/>
</dbReference>
<dbReference type="PROSITE" id="PS50198">
    <property type="entry name" value="PPIC_PPIASE_2"/>
    <property type="match status" value="1"/>
</dbReference>
<dbReference type="PROSITE" id="PS51257">
    <property type="entry name" value="PROKAR_LIPOPROTEIN"/>
    <property type="match status" value="1"/>
</dbReference>
<keyword id="KW-1003">Cell membrane</keyword>
<keyword id="KW-0413">Isomerase</keyword>
<keyword id="KW-0449">Lipoprotein</keyword>
<keyword id="KW-0472">Membrane</keyword>
<keyword id="KW-0564">Palmitate</keyword>
<keyword id="KW-1185">Reference proteome</keyword>
<keyword id="KW-0697">Rotamase</keyword>
<keyword id="KW-0732">Signal</keyword>
<accession>Q5L289</accession>
<proteinExistence type="inferred from homology"/>
<evidence type="ECO:0000255" key="1">
    <source>
        <dbReference type="HAMAP-Rule" id="MF_01145"/>
    </source>
</evidence>
<sequence>MKKWMMAAAVVSLMALSACSNDGSEAIVETKNGNITKDEFYNEMKERVGKSVLRDLIDEKVLSKKYKVTDEEIDREIERIKEAYGTQYDLAVQQNGEKVIREMVKLDLLRTKAAVEDIKVTEKELKEYYDNYKPKIRASHILVKDEKTAKEVKAKLDKGEDFSKLAKEYSQDPGSASNGGDLGWFGPGKMVKEFEEAAYKLKVGEVSDPVKTDYGYHIIKVTDKEKKKSFNEMKDEIAFEVKRNKLDPATMQSKVDKLVKDAGVEIKDKDLQDVIEQQGKQ</sequence>